<protein>
    <recommendedName>
        <fullName>Laccase-1</fullName>
        <ecNumber evidence="2">1.10.3.2</ecNumber>
    </recommendedName>
    <alternativeName>
        <fullName>Benzenediol:oxygen oxidoreductase 1</fullName>
    </alternativeName>
    <alternativeName>
        <fullName>Diphenol oxidase 1</fullName>
    </alternativeName>
    <alternativeName>
        <fullName>Urishiol oxidase 1</fullName>
    </alternativeName>
</protein>
<proteinExistence type="evidence at transcript level"/>
<comment type="function">
    <text evidence="2">Lignin degradation and detoxification of lignin-derived products.</text>
</comment>
<comment type="catalytic activity">
    <reaction evidence="2">
        <text>4 hydroquinone + O2 = 4 benzosemiquinone + 2 H2O</text>
        <dbReference type="Rhea" id="RHEA:11276"/>
        <dbReference type="ChEBI" id="CHEBI:15377"/>
        <dbReference type="ChEBI" id="CHEBI:15379"/>
        <dbReference type="ChEBI" id="CHEBI:17594"/>
        <dbReference type="ChEBI" id="CHEBI:17977"/>
        <dbReference type="EC" id="1.10.3.2"/>
    </reaction>
</comment>
<comment type="cofactor">
    <cofactor evidence="2">
        <name>Cu cation</name>
        <dbReference type="ChEBI" id="CHEBI:23378"/>
    </cofactor>
    <text evidence="2">Binds 4 Cu cations per monomer.</text>
</comment>
<comment type="subcellular location">
    <subcellularLocation>
        <location evidence="2">Secreted</location>
    </subcellularLocation>
</comment>
<comment type="induction">
    <text evidence="4">Not induced by resveratrol or tannins.</text>
</comment>
<comment type="similarity">
    <text evidence="5">Belongs to the multicopper oxidase family.</text>
</comment>
<comment type="sequence caution" evidence="5">
    <conflict type="erroneous gene model prediction">
        <sequence resource="EMBL-CDS" id="AAB41823"/>
    </conflict>
    <text>The sequence does probably not originate from mRNA or it was not properly spliced.</text>
</comment>
<reference key="1">
    <citation type="journal article" date="2002" name="Mol. Microbiol.">
        <title>Resveratrol acts as a natural profungicide and induces self-intoxication by a specific laccase.</title>
        <authorList>
            <person name="Schouten A."/>
            <person name="Wagemakers L."/>
            <person name="Stefanato F.L."/>
            <person name="van der Kaaij R.M."/>
            <person name="van Kan J.A.L."/>
        </authorList>
    </citation>
    <scope>NUCLEOTIDE SEQUENCE [GENOMIC DNA]</scope>
    <scope>INDUCTION</scope>
    <source>
        <strain>SAS56</strain>
    </source>
</reference>
<reference key="2">
    <citation type="journal article" date="1993" name="Phytopathology">
        <title>A laccase cDNA from Botrytis cinerea.</title>
        <authorList>
            <person name="Cantone F.A."/>
            <person name="Staples R.C."/>
        </authorList>
    </citation>
    <scope>NUCLEOTIDE SEQUENCE [MRNA] OF 115-561</scope>
    <source>
        <strain>SAS56</strain>
    </source>
</reference>
<gene>
    <name type="primary">lcc1</name>
    <name type="synonym">lac1</name>
</gene>
<evidence type="ECO:0000250" key="1">
    <source>
        <dbReference type="UniProtKB" id="D0VWU3"/>
    </source>
</evidence>
<evidence type="ECO:0000250" key="2">
    <source>
        <dbReference type="UniProtKB" id="Q70KY3"/>
    </source>
</evidence>
<evidence type="ECO:0000255" key="3"/>
<evidence type="ECO:0000269" key="4">
    <source>
    </source>
</evidence>
<evidence type="ECO:0000305" key="5"/>
<feature type="signal peptide" evidence="3">
    <location>
        <begin position="1"/>
        <end position="20"/>
    </location>
</feature>
<feature type="chain" id="PRO_0000085584" description="Laccase-1">
    <location>
        <begin position="21"/>
        <end position="561"/>
    </location>
</feature>
<feature type="domain" description="Plastocyanin-like 1">
    <location>
        <begin position="68"/>
        <end position="185"/>
    </location>
</feature>
<feature type="domain" description="Plastocyanin-like 2">
    <location>
        <begin position="191"/>
        <end position="337"/>
    </location>
</feature>
<feature type="domain" description="Plastocyanin-like 3">
    <location>
        <begin position="396"/>
        <end position="525"/>
    </location>
</feature>
<feature type="binding site" description="type 2 copper site" evidence="1">
    <location>
        <position position="119"/>
    </location>
    <ligand>
        <name>Cu cation</name>
        <dbReference type="ChEBI" id="CHEBI:23378"/>
        <label>1</label>
    </ligand>
</feature>
<feature type="binding site" description="type 3 copper site" evidence="1">
    <location>
        <position position="121"/>
    </location>
    <ligand>
        <name>Cu cation</name>
        <dbReference type="ChEBI" id="CHEBI:23378"/>
        <label>2</label>
    </ligand>
</feature>
<feature type="binding site" description="type 3 copper site" evidence="1">
    <location>
        <position position="163"/>
    </location>
    <ligand>
        <name>Cu cation</name>
        <dbReference type="ChEBI" id="CHEBI:23378"/>
        <label>2</label>
    </ligand>
</feature>
<feature type="binding site" description="type 3 copper site" evidence="1">
    <location>
        <position position="165"/>
    </location>
    <ligand>
        <name>Cu cation</name>
        <dbReference type="ChEBI" id="CHEBI:23378"/>
        <label>3</label>
    </ligand>
</feature>
<feature type="binding site" description="type 1 copper site" evidence="1">
    <location>
        <position position="445"/>
    </location>
    <ligand>
        <name>Cu cation</name>
        <dbReference type="ChEBI" id="CHEBI:23378"/>
        <label>4</label>
    </ligand>
</feature>
<feature type="binding site" description="type 2 copper site" evidence="1">
    <location>
        <position position="448"/>
    </location>
    <ligand>
        <name>Cu cation</name>
        <dbReference type="ChEBI" id="CHEBI:23378"/>
        <label>1</label>
    </ligand>
</feature>
<feature type="binding site" description="type 3 copper site" evidence="1">
    <location>
        <position position="450"/>
    </location>
    <ligand>
        <name>Cu cation</name>
        <dbReference type="ChEBI" id="CHEBI:23378"/>
        <label>3</label>
    </ligand>
</feature>
<feature type="binding site" description="type 3 copper site" evidence="1">
    <location>
        <position position="504"/>
    </location>
    <ligand>
        <name>Cu cation</name>
        <dbReference type="ChEBI" id="CHEBI:23378"/>
        <label>3</label>
    </ligand>
</feature>
<feature type="binding site" description="type 1 copper site" evidence="1">
    <location>
        <position position="505"/>
    </location>
    <ligand>
        <name>Cu cation</name>
        <dbReference type="ChEBI" id="CHEBI:23378"/>
        <label>4</label>
    </ligand>
</feature>
<feature type="binding site" description="type 3 copper site" evidence="1">
    <location>
        <position position="506"/>
    </location>
    <ligand>
        <name>Cu cation</name>
        <dbReference type="ChEBI" id="CHEBI:23378"/>
        <label>2</label>
    </ligand>
</feature>
<feature type="binding site" description="type 1 copper site" evidence="1">
    <location>
        <position position="510"/>
    </location>
    <ligand>
        <name>Cu cation</name>
        <dbReference type="ChEBI" id="CHEBI:23378"/>
        <label>4</label>
    </ligand>
</feature>
<feature type="glycosylation site" description="N-linked (GlcNAc...) asparagine" evidence="3">
    <location>
        <position position="71"/>
    </location>
</feature>
<feature type="glycosylation site" description="N-linked (GlcNAc...) asparagine" evidence="3">
    <location>
        <position position="87"/>
    </location>
</feature>
<feature type="glycosylation site" description="N-linked (GlcNAc...) asparagine" evidence="3">
    <location>
        <position position="114"/>
    </location>
</feature>
<feature type="glycosylation site" description="N-linked (GlcNAc...) asparagine" evidence="3">
    <location>
        <position position="226"/>
    </location>
</feature>
<feature type="glycosylation site" description="N-linked (GlcNAc...) asparagine" evidence="3">
    <location>
        <position position="284"/>
    </location>
</feature>
<feature type="glycosylation site" description="N-linked (GlcNAc...) asparagine" evidence="3">
    <location>
        <position position="327"/>
    </location>
</feature>
<feature type="glycosylation site" description="N-linked (GlcNAc...) asparagine" evidence="3">
    <location>
        <position position="391"/>
    </location>
</feature>
<feature type="glycosylation site" description="N-linked (GlcNAc...) asparagine" evidence="3">
    <location>
        <position position="398"/>
    </location>
</feature>
<feature type="disulfide bond" evidence="2">
    <location>
        <begin position="140"/>
        <end position="542"/>
    </location>
</feature>
<feature type="sequence conflict" description="In Ref. 2; AAB41823." evidence="5" ref="2">
    <original>SI</original>
    <variation>TM</variation>
    <location>
        <begin position="117"/>
        <end position="118"/>
    </location>
</feature>
<feature type="sequence conflict" description="In Ref. 2; AAB41823." evidence="5" ref="2">
    <original>V</original>
    <variation>I</variation>
    <location>
        <position position="372"/>
    </location>
</feature>
<feature type="sequence conflict" description="In Ref. 2; AAB41823." evidence="5" ref="2">
    <original>N</original>
    <variation>K</variation>
    <location>
        <position position="429"/>
    </location>
</feature>
<feature type="sequence conflict" description="In Ref. 2; AAB41823." evidence="5" ref="2">
    <original>M</original>
    <variation>L</variation>
    <location>
        <position position="481"/>
    </location>
</feature>
<feature type="sequence conflict" description="In Ref. 2; AAB41823." evidence="5" ref="2">
    <original>P</original>
    <variation>S</variation>
    <location>
        <position position="484"/>
    </location>
</feature>
<feature type="sequence conflict" description="In Ref. 2; AAB41823." evidence="5" ref="2">
    <original>A</original>
    <variation>V</variation>
    <location>
        <position position="511"/>
    </location>
</feature>
<feature type="sequence conflict" description="In Ref. 2; AAB41823." evidence="5" ref="2">
    <original>A</original>
    <variation>G</variation>
    <location>
        <position position="547"/>
    </location>
</feature>
<organism>
    <name type="scientific">Botryotinia fuckeliana</name>
    <name type="common">Noble rot fungus</name>
    <name type="synonym">Botrytis cinerea</name>
    <dbReference type="NCBI Taxonomy" id="40559"/>
    <lineage>
        <taxon>Eukaryota</taxon>
        <taxon>Fungi</taxon>
        <taxon>Dikarya</taxon>
        <taxon>Ascomycota</taxon>
        <taxon>Pezizomycotina</taxon>
        <taxon>Leotiomycetes</taxon>
        <taxon>Helotiales</taxon>
        <taxon>Sclerotiniaceae</taxon>
        <taxon>Botrytis</taxon>
    </lineage>
</organism>
<accession>Q12570</accession>
<accession>Q96WN0</accession>
<name>LAC1_BOTFU</name>
<dbReference type="EC" id="1.10.3.2" evidence="2"/>
<dbReference type="EMBL" id="AF243854">
    <property type="protein sequence ID" value="AAK77952.1"/>
    <property type="molecule type" value="Genomic_DNA"/>
</dbReference>
<dbReference type="EMBL" id="U20192">
    <property type="protein sequence ID" value="AAB41823.1"/>
    <property type="status" value="ALT_SEQ"/>
    <property type="molecule type" value="mRNA"/>
</dbReference>
<dbReference type="SMR" id="Q12570"/>
<dbReference type="CAZy" id="AA1">
    <property type="family name" value="Auxiliary Activities 1"/>
</dbReference>
<dbReference type="GlyCosmos" id="Q12570">
    <property type="glycosylation" value="8 sites, No reported glycans"/>
</dbReference>
<dbReference type="GO" id="GO:0005576">
    <property type="term" value="C:extracellular region"/>
    <property type="evidence" value="ECO:0007669"/>
    <property type="project" value="UniProtKB-SubCell"/>
</dbReference>
<dbReference type="GO" id="GO:0005507">
    <property type="term" value="F:copper ion binding"/>
    <property type="evidence" value="ECO:0007669"/>
    <property type="project" value="InterPro"/>
</dbReference>
<dbReference type="GO" id="GO:0052716">
    <property type="term" value="F:hydroquinone:oxygen oxidoreductase activity"/>
    <property type="evidence" value="ECO:0007669"/>
    <property type="project" value="UniProtKB-EC"/>
</dbReference>
<dbReference type="GO" id="GO:0046274">
    <property type="term" value="P:lignin catabolic process"/>
    <property type="evidence" value="ECO:0007669"/>
    <property type="project" value="UniProtKB-KW"/>
</dbReference>
<dbReference type="CDD" id="cd13854">
    <property type="entry name" value="CuRO_1_MaLCC_like"/>
    <property type="match status" value="1"/>
</dbReference>
<dbReference type="CDD" id="cd13880">
    <property type="entry name" value="CuRO_2_MaLCC_like"/>
    <property type="match status" value="1"/>
</dbReference>
<dbReference type="CDD" id="cd13901">
    <property type="entry name" value="CuRO_3_MaLCC_like"/>
    <property type="match status" value="1"/>
</dbReference>
<dbReference type="FunFam" id="2.60.40.420:FF:000021">
    <property type="entry name" value="Extracellular dihydrogeodin oxidase/laccase"/>
    <property type="match status" value="1"/>
</dbReference>
<dbReference type="FunFam" id="2.60.40.420:FF:000038">
    <property type="entry name" value="Extracellular dihydrogeodin oxidase/laccase"/>
    <property type="match status" value="1"/>
</dbReference>
<dbReference type="Gene3D" id="2.60.40.420">
    <property type="entry name" value="Cupredoxins - blue copper proteins"/>
    <property type="match status" value="3"/>
</dbReference>
<dbReference type="InterPro" id="IPR011707">
    <property type="entry name" value="Cu-oxidase-like_N"/>
</dbReference>
<dbReference type="InterPro" id="IPR001117">
    <property type="entry name" value="Cu-oxidase_2nd"/>
</dbReference>
<dbReference type="InterPro" id="IPR011706">
    <property type="entry name" value="Cu-oxidase_C"/>
</dbReference>
<dbReference type="InterPro" id="IPR045087">
    <property type="entry name" value="Cu-oxidase_fam"/>
</dbReference>
<dbReference type="InterPro" id="IPR033138">
    <property type="entry name" value="Cu_oxidase_CS"/>
</dbReference>
<dbReference type="InterPro" id="IPR002355">
    <property type="entry name" value="Cu_oxidase_Cu_BS"/>
</dbReference>
<dbReference type="InterPro" id="IPR008972">
    <property type="entry name" value="Cupredoxin"/>
</dbReference>
<dbReference type="PANTHER" id="PTHR11709">
    <property type="entry name" value="MULTI-COPPER OXIDASE"/>
    <property type="match status" value="1"/>
</dbReference>
<dbReference type="PANTHER" id="PTHR11709:SF71">
    <property type="entry name" value="OXIDOREDUCTASE TPCJ"/>
    <property type="match status" value="1"/>
</dbReference>
<dbReference type="Pfam" id="PF00394">
    <property type="entry name" value="Cu-oxidase"/>
    <property type="match status" value="1"/>
</dbReference>
<dbReference type="Pfam" id="PF07731">
    <property type="entry name" value="Cu-oxidase_2"/>
    <property type="match status" value="1"/>
</dbReference>
<dbReference type="Pfam" id="PF07732">
    <property type="entry name" value="Cu-oxidase_3"/>
    <property type="match status" value="1"/>
</dbReference>
<dbReference type="SUPFAM" id="SSF49503">
    <property type="entry name" value="Cupredoxins"/>
    <property type="match status" value="3"/>
</dbReference>
<dbReference type="PROSITE" id="PS00079">
    <property type="entry name" value="MULTICOPPER_OXIDASE1"/>
    <property type="match status" value="1"/>
</dbReference>
<dbReference type="PROSITE" id="PS00080">
    <property type="entry name" value="MULTICOPPER_OXIDASE2"/>
    <property type="match status" value="1"/>
</dbReference>
<sequence>MKNSFFSSLAKFASLSLAFALPTAEVIPSALEERQSCANTATTRSCWGQYSASTNSYTTVPKTGYWLVVQNTTLSADGVSRPTLNFNGTIPGPQITADWGDDVIVHVTNKLTSNGTSIHWHGIRQLNNAQYDGVPGITQCPIAPGGTLTYKFHADNYGSSWYHSHFILQYGDGLFGPLVINGPATANYDVDLGMLFLNDWNHVPVQSLWDKAKTGAPPTLLTGLMNGTNTYNGAGKKFQTTFTPGLKYRIRVVNTAVDGHFQFSIDGHSFQVIAMDFVPIVPYNATSILVSIAQRYDIIVTANAAVGNYWIRAGWQTACSGNTNAANITGILRYTGSSSTADPTTTSTVTASTSCLDEPLASLVPFVPINPVASSIMKTTLTTGGGQWLFNGSSLLLNWTDPTLLTVLNSGNIWPTEYNVIPIESTTANKGWAVLAISGPNGPNHPIHLHGHDFWTLSQGTGAYTATTALNLVNPPRRDVMTLPTGGHLVIAFQIDNPGSWLMHCHIAWHASEGLALQFVESESSILPTIGTADVSTFQNTCAAWKAWTPTEPFPQDDSGI</sequence>
<keyword id="KW-0186">Copper</keyword>
<keyword id="KW-1015">Disulfide bond</keyword>
<keyword id="KW-0325">Glycoprotein</keyword>
<keyword id="KW-0439">Lignin degradation</keyword>
<keyword id="KW-0479">Metal-binding</keyword>
<keyword id="KW-0560">Oxidoreductase</keyword>
<keyword id="KW-0677">Repeat</keyword>
<keyword id="KW-0964">Secreted</keyword>
<keyword id="KW-0732">Signal</keyword>